<dbReference type="EC" id="2.4.2.10" evidence="1"/>
<dbReference type="EMBL" id="CU468135">
    <property type="protein sequence ID" value="CAO95108.1"/>
    <property type="molecule type" value="Genomic_DNA"/>
</dbReference>
<dbReference type="RefSeq" id="WP_012439836.1">
    <property type="nucleotide sequence ID" value="NC_010694.1"/>
</dbReference>
<dbReference type="SMR" id="B2VF77"/>
<dbReference type="STRING" id="465817.ETA_00620"/>
<dbReference type="KEGG" id="eta:ETA_00620"/>
<dbReference type="eggNOG" id="COG0461">
    <property type="taxonomic scope" value="Bacteria"/>
</dbReference>
<dbReference type="HOGENOM" id="CLU_074878_0_1_6"/>
<dbReference type="OrthoDB" id="9779060at2"/>
<dbReference type="UniPathway" id="UPA00070">
    <property type="reaction ID" value="UER00119"/>
</dbReference>
<dbReference type="Proteomes" id="UP000001726">
    <property type="component" value="Chromosome"/>
</dbReference>
<dbReference type="GO" id="GO:0005737">
    <property type="term" value="C:cytoplasm"/>
    <property type="evidence" value="ECO:0007669"/>
    <property type="project" value="TreeGrafter"/>
</dbReference>
<dbReference type="GO" id="GO:0000287">
    <property type="term" value="F:magnesium ion binding"/>
    <property type="evidence" value="ECO:0007669"/>
    <property type="project" value="UniProtKB-UniRule"/>
</dbReference>
<dbReference type="GO" id="GO:0004588">
    <property type="term" value="F:orotate phosphoribosyltransferase activity"/>
    <property type="evidence" value="ECO:0007669"/>
    <property type="project" value="UniProtKB-UniRule"/>
</dbReference>
<dbReference type="GO" id="GO:0006207">
    <property type="term" value="P:'de novo' pyrimidine nucleobase biosynthetic process"/>
    <property type="evidence" value="ECO:0007669"/>
    <property type="project" value="TreeGrafter"/>
</dbReference>
<dbReference type="GO" id="GO:0044205">
    <property type="term" value="P:'de novo' UMP biosynthetic process"/>
    <property type="evidence" value="ECO:0007669"/>
    <property type="project" value="UniProtKB-UniRule"/>
</dbReference>
<dbReference type="GO" id="GO:0046132">
    <property type="term" value="P:pyrimidine ribonucleoside biosynthetic process"/>
    <property type="evidence" value="ECO:0007669"/>
    <property type="project" value="TreeGrafter"/>
</dbReference>
<dbReference type="CDD" id="cd06223">
    <property type="entry name" value="PRTases_typeI"/>
    <property type="match status" value="1"/>
</dbReference>
<dbReference type="FunFam" id="3.40.50.2020:FF:000008">
    <property type="entry name" value="Orotate phosphoribosyltransferase"/>
    <property type="match status" value="1"/>
</dbReference>
<dbReference type="Gene3D" id="3.40.50.2020">
    <property type="match status" value="1"/>
</dbReference>
<dbReference type="HAMAP" id="MF_01208">
    <property type="entry name" value="PyrE"/>
    <property type="match status" value="1"/>
</dbReference>
<dbReference type="InterPro" id="IPR023031">
    <property type="entry name" value="OPRT"/>
</dbReference>
<dbReference type="InterPro" id="IPR004467">
    <property type="entry name" value="Or_phspho_trans_dom"/>
</dbReference>
<dbReference type="InterPro" id="IPR000836">
    <property type="entry name" value="PRibTrfase_dom"/>
</dbReference>
<dbReference type="InterPro" id="IPR029057">
    <property type="entry name" value="PRTase-like"/>
</dbReference>
<dbReference type="NCBIfam" id="TIGR00336">
    <property type="entry name" value="pyrE"/>
    <property type="match status" value="1"/>
</dbReference>
<dbReference type="PANTHER" id="PTHR46683">
    <property type="entry name" value="OROTATE PHOSPHORIBOSYLTRANSFERASE 1-RELATED"/>
    <property type="match status" value="1"/>
</dbReference>
<dbReference type="PANTHER" id="PTHR46683:SF1">
    <property type="entry name" value="OROTATE PHOSPHORIBOSYLTRANSFERASE 1-RELATED"/>
    <property type="match status" value="1"/>
</dbReference>
<dbReference type="Pfam" id="PF00156">
    <property type="entry name" value="Pribosyltran"/>
    <property type="match status" value="1"/>
</dbReference>
<dbReference type="SUPFAM" id="SSF53271">
    <property type="entry name" value="PRTase-like"/>
    <property type="match status" value="1"/>
</dbReference>
<dbReference type="PROSITE" id="PS00103">
    <property type="entry name" value="PUR_PYR_PR_TRANSFER"/>
    <property type="match status" value="1"/>
</dbReference>
<proteinExistence type="inferred from homology"/>
<comment type="function">
    <text evidence="1">Catalyzes the transfer of a ribosyl phosphate group from 5-phosphoribose 1-diphosphate to orotate, leading to the formation of orotidine monophosphate (OMP).</text>
</comment>
<comment type="catalytic activity">
    <reaction evidence="1">
        <text>orotidine 5'-phosphate + diphosphate = orotate + 5-phospho-alpha-D-ribose 1-diphosphate</text>
        <dbReference type="Rhea" id="RHEA:10380"/>
        <dbReference type="ChEBI" id="CHEBI:30839"/>
        <dbReference type="ChEBI" id="CHEBI:33019"/>
        <dbReference type="ChEBI" id="CHEBI:57538"/>
        <dbReference type="ChEBI" id="CHEBI:58017"/>
        <dbReference type="EC" id="2.4.2.10"/>
    </reaction>
</comment>
<comment type="cofactor">
    <cofactor evidence="1">
        <name>Mg(2+)</name>
        <dbReference type="ChEBI" id="CHEBI:18420"/>
    </cofactor>
</comment>
<comment type="pathway">
    <text evidence="1">Pyrimidine metabolism; UMP biosynthesis via de novo pathway; UMP from orotate: step 1/2.</text>
</comment>
<comment type="subunit">
    <text evidence="1">Homodimer.</text>
</comment>
<comment type="similarity">
    <text evidence="1">Belongs to the purine/pyrimidine phosphoribosyltransferase family. PyrE subfamily.</text>
</comment>
<evidence type="ECO:0000255" key="1">
    <source>
        <dbReference type="HAMAP-Rule" id="MF_01208"/>
    </source>
</evidence>
<name>PYRE_ERWT9</name>
<protein>
    <recommendedName>
        <fullName evidence="1">Orotate phosphoribosyltransferase</fullName>
        <shortName evidence="1">OPRT</shortName>
        <shortName evidence="1">OPRTase</shortName>
        <ecNumber evidence="1">2.4.2.10</ecNumber>
    </recommendedName>
</protein>
<sequence length="213" mass="23472">MKAWQRQFIEFAINKQVLKFGEFTLKSGRKSPYFFNAGLFNTGRDLALLGRFYAQALVDSGIDFDLVFGPAYKGIPIATTTVVALADHYDRDVPYCFNRKEAKDHGEGGTLVGSPLQGKIMLVDDVITAGTAIRESMEIIAAHRAKLAGVLISLDRQERGSGAISAIQEVERDYGCKVISIITLNELVAYLAEKPEMADSLIAVRAYRDEFGI</sequence>
<reference key="1">
    <citation type="journal article" date="2008" name="Environ. Microbiol.">
        <title>The genome of Erwinia tasmaniensis strain Et1/99, a non-pathogenic bacterium in the genus Erwinia.</title>
        <authorList>
            <person name="Kube M."/>
            <person name="Migdoll A.M."/>
            <person name="Mueller I."/>
            <person name="Kuhl H."/>
            <person name="Beck A."/>
            <person name="Reinhardt R."/>
            <person name="Geider K."/>
        </authorList>
    </citation>
    <scope>NUCLEOTIDE SEQUENCE [LARGE SCALE GENOMIC DNA]</scope>
    <source>
        <strain>DSM 17950 / CFBP 7177 / CIP 109463 / NCPPB 4357 / Et1/99</strain>
    </source>
</reference>
<feature type="chain" id="PRO_1000138793" description="Orotate phosphoribosyltransferase">
    <location>
        <begin position="1"/>
        <end position="213"/>
    </location>
</feature>
<feature type="binding site" description="in other chain" evidence="1">
    <location>
        <position position="26"/>
    </location>
    <ligand>
        <name>5-phospho-alpha-D-ribose 1-diphosphate</name>
        <dbReference type="ChEBI" id="CHEBI:58017"/>
        <note>ligand shared between dimeric partners</note>
    </ligand>
</feature>
<feature type="binding site" evidence="1">
    <location>
        <begin position="34"/>
        <end position="35"/>
    </location>
    <ligand>
        <name>orotate</name>
        <dbReference type="ChEBI" id="CHEBI:30839"/>
    </ligand>
</feature>
<feature type="binding site" description="in other chain" evidence="1">
    <location>
        <begin position="72"/>
        <end position="73"/>
    </location>
    <ligand>
        <name>5-phospho-alpha-D-ribose 1-diphosphate</name>
        <dbReference type="ChEBI" id="CHEBI:58017"/>
        <note>ligand shared between dimeric partners</note>
    </ligand>
</feature>
<feature type="binding site" evidence="1">
    <location>
        <position position="99"/>
    </location>
    <ligand>
        <name>5-phospho-alpha-D-ribose 1-diphosphate</name>
        <dbReference type="ChEBI" id="CHEBI:58017"/>
        <note>ligand shared between dimeric partners</note>
    </ligand>
</feature>
<feature type="binding site" description="in other chain" evidence="1">
    <location>
        <position position="100"/>
    </location>
    <ligand>
        <name>5-phospho-alpha-D-ribose 1-diphosphate</name>
        <dbReference type="ChEBI" id="CHEBI:58017"/>
        <note>ligand shared between dimeric partners</note>
    </ligand>
</feature>
<feature type="binding site" evidence="1">
    <location>
        <position position="103"/>
    </location>
    <ligand>
        <name>5-phospho-alpha-D-ribose 1-diphosphate</name>
        <dbReference type="ChEBI" id="CHEBI:58017"/>
        <note>ligand shared between dimeric partners</note>
    </ligand>
</feature>
<feature type="binding site" evidence="1">
    <location>
        <position position="105"/>
    </location>
    <ligand>
        <name>5-phospho-alpha-D-ribose 1-diphosphate</name>
        <dbReference type="ChEBI" id="CHEBI:58017"/>
        <note>ligand shared between dimeric partners</note>
    </ligand>
</feature>
<feature type="binding site" description="in other chain" evidence="1">
    <location>
        <begin position="124"/>
        <end position="132"/>
    </location>
    <ligand>
        <name>5-phospho-alpha-D-ribose 1-diphosphate</name>
        <dbReference type="ChEBI" id="CHEBI:58017"/>
        <note>ligand shared between dimeric partners</note>
    </ligand>
</feature>
<feature type="binding site" evidence="1">
    <location>
        <position position="128"/>
    </location>
    <ligand>
        <name>orotate</name>
        <dbReference type="ChEBI" id="CHEBI:30839"/>
    </ligand>
</feature>
<feature type="binding site" evidence="1">
    <location>
        <position position="156"/>
    </location>
    <ligand>
        <name>orotate</name>
        <dbReference type="ChEBI" id="CHEBI:30839"/>
    </ligand>
</feature>
<organism>
    <name type="scientific">Erwinia tasmaniensis (strain DSM 17950 / CFBP 7177 / CIP 109463 / NCPPB 4357 / Et1/99)</name>
    <dbReference type="NCBI Taxonomy" id="465817"/>
    <lineage>
        <taxon>Bacteria</taxon>
        <taxon>Pseudomonadati</taxon>
        <taxon>Pseudomonadota</taxon>
        <taxon>Gammaproteobacteria</taxon>
        <taxon>Enterobacterales</taxon>
        <taxon>Erwiniaceae</taxon>
        <taxon>Erwinia</taxon>
    </lineage>
</organism>
<accession>B2VF77</accession>
<gene>
    <name evidence="1" type="primary">pyrE</name>
    <name type="ordered locus">ETA_00620</name>
</gene>
<keyword id="KW-0328">Glycosyltransferase</keyword>
<keyword id="KW-0460">Magnesium</keyword>
<keyword id="KW-0665">Pyrimidine biosynthesis</keyword>
<keyword id="KW-1185">Reference proteome</keyword>
<keyword id="KW-0808">Transferase</keyword>